<organism>
    <name type="scientific">Escherichia coli O6:H1 (strain CFT073 / ATCC 700928 / UPEC)</name>
    <dbReference type="NCBI Taxonomy" id="199310"/>
    <lineage>
        <taxon>Bacteria</taxon>
        <taxon>Pseudomonadati</taxon>
        <taxon>Pseudomonadota</taxon>
        <taxon>Gammaproteobacteria</taxon>
        <taxon>Enterobacterales</taxon>
        <taxon>Enterobacteriaceae</taxon>
        <taxon>Escherichia</taxon>
    </lineage>
</organism>
<name>PYRF_ECOL6</name>
<protein>
    <recommendedName>
        <fullName evidence="1">Orotidine 5'-phosphate decarboxylase</fullName>
        <ecNumber evidence="1">4.1.1.23</ecNumber>
    </recommendedName>
    <alternativeName>
        <fullName evidence="1">OMP decarboxylase</fullName>
        <shortName evidence="1">OMPDCase</shortName>
        <shortName evidence="1">OMPdecase</shortName>
    </alternativeName>
</protein>
<comment type="function">
    <text evidence="1">Catalyzes the decarboxylation of orotidine 5'-monophosphate (OMP) to uridine 5'-monophosphate (UMP).</text>
</comment>
<comment type="catalytic activity">
    <reaction evidence="1">
        <text>orotidine 5'-phosphate + H(+) = UMP + CO2</text>
        <dbReference type="Rhea" id="RHEA:11596"/>
        <dbReference type="ChEBI" id="CHEBI:15378"/>
        <dbReference type="ChEBI" id="CHEBI:16526"/>
        <dbReference type="ChEBI" id="CHEBI:57538"/>
        <dbReference type="ChEBI" id="CHEBI:57865"/>
        <dbReference type="EC" id="4.1.1.23"/>
    </reaction>
</comment>
<comment type="pathway">
    <text evidence="1">Pyrimidine metabolism; UMP biosynthesis via de novo pathway; UMP from orotate: step 2/2.</text>
</comment>
<comment type="subunit">
    <text evidence="1">Homodimer.</text>
</comment>
<comment type="similarity">
    <text evidence="1">Belongs to the OMP decarboxylase family. Type 1 subfamily.</text>
</comment>
<comment type="sequence caution" evidence="2">
    <conflict type="erroneous initiation">
        <sequence resource="EMBL-CDS" id="AAN80216"/>
    </conflict>
</comment>
<dbReference type="EC" id="4.1.1.23" evidence="1"/>
<dbReference type="EMBL" id="AE014075">
    <property type="protein sequence ID" value="AAN80216.1"/>
    <property type="status" value="ALT_INIT"/>
    <property type="molecule type" value="Genomic_DNA"/>
</dbReference>
<dbReference type="RefSeq" id="WP_001357400.1">
    <property type="nucleotide sequence ID" value="NZ_CP051263.1"/>
</dbReference>
<dbReference type="SMR" id="Q8FHU2"/>
<dbReference type="STRING" id="199310.c1750"/>
<dbReference type="KEGG" id="ecc:c1750"/>
<dbReference type="eggNOG" id="COG0284">
    <property type="taxonomic scope" value="Bacteria"/>
</dbReference>
<dbReference type="HOGENOM" id="CLU_067069_0_0_6"/>
<dbReference type="UniPathway" id="UPA00070">
    <property type="reaction ID" value="UER00120"/>
</dbReference>
<dbReference type="Proteomes" id="UP000001410">
    <property type="component" value="Chromosome"/>
</dbReference>
<dbReference type="GO" id="GO:0005829">
    <property type="term" value="C:cytosol"/>
    <property type="evidence" value="ECO:0007669"/>
    <property type="project" value="TreeGrafter"/>
</dbReference>
<dbReference type="GO" id="GO:0004590">
    <property type="term" value="F:orotidine-5'-phosphate decarboxylase activity"/>
    <property type="evidence" value="ECO:0007669"/>
    <property type="project" value="UniProtKB-UniRule"/>
</dbReference>
<dbReference type="GO" id="GO:0006207">
    <property type="term" value="P:'de novo' pyrimidine nucleobase biosynthetic process"/>
    <property type="evidence" value="ECO:0007669"/>
    <property type="project" value="InterPro"/>
</dbReference>
<dbReference type="GO" id="GO:0044205">
    <property type="term" value="P:'de novo' UMP biosynthetic process"/>
    <property type="evidence" value="ECO:0007669"/>
    <property type="project" value="UniProtKB-UniRule"/>
</dbReference>
<dbReference type="CDD" id="cd04725">
    <property type="entry name" value="OMP_decarboxylase_like"/>
    <property type="match status" value="1"/>
</dbReference>
<dbReference type="FunFam" id="3.20.20.70:FF:000015">
    <property type="entry name" value="Orotidine 5'-phosphate decarboxylase"/>
    <property type="match status" value="1"/>
</dbReference>
<dbReference type="Gene3D" id="3.20.20.70">
    <property type="entry name" value="Aldolase class I"/>
    <property type="match status" value="1"/>
</dbReference>
<dbReference type="HAMAP" id="MF_01200_B">
    <property type="entry name" value="OMPdecase_type1_B"/>
    <property type="match status" value="1"/>
</dbReference>
<dbReference type="InterPro" id="IPR013785">
    <property type="entry name" value="Aldolase_TIM"/>
</dbReference>
<dbReference type="InterPro" id="IPR014732">
    <property type="entry name" value="OMPdecase"/>
</dbReference>
<dbReference type="InterPro" id="IPR018089">
    <property type="entry name" value="OMPdecase_AS"/>
</dbReference>
<dbReference type="InterPro" id="IPR047596">
    <property type="entry name" value="OMPdecase_bac"/>
</dbReference>
<dbReference type="InterPro" id="IPR001754">
    <property type="entry name" value="OMPdeCOase_dom"/>
</dbReference>
<dbReference type="InterPro" id="IPR011060">
    <property type="entry name" value="RibuloseP-bd_barrel"/>
</dbReference>
<dbReference type="NCBIfam" id="NF001273">
    <property type="entry name" value="PRK00230.1"/>
    <property type="match status" value="1"/>
</dbReference>
<dbReference type="NCBIfam" id="TIGR01740">
    <property type="entry name" value="pyrF"/>
    <property type="match status" value="1"/>
</dbReference>
<dbReference type="PANTHER" id="PTHR32119">
    <property type="entry name" value="OROTIDINE 5'-PHOSPHATE DECARBOXYLASE"/>
    <property type="match status" value="1"/>
</dbReference>
<dbReference type="PANTHER" id="PTHR32119:SF2">
    <property type="entry name" value="OROTIDINE 5'-PHOSPHATE DECARBOXYLASE"/>
    <property type="match status" value="1"/>
</dbReference>
<dbReference type="Pfam" id="PF00215">
    <property type="entry name" value="OMPdecase"/>
    <property type="match status" value="1"/>
</dbReference>
<dbReference type="SMART" id="SM00934">
    <property type="entry name" value="OMPdecase"/>
    <property type="match status" value="1"/>
</dbReference>
<dbReference type="SUPFAM" id="SSF51366">
    <property type="entry name" value="Ribulose-phoshate binding barrel"/>
    <property type="match status" value="1"/>
</dbReference>
<dbReference type="PROSITE" id="PS00156">
    <property type="entry name" value="OMPDECASE"/>
    <property type="match status" value="1"/>
</dbReference>
<proteinExistence type="inferred from homology"/>
<reference key="1">
    <citation type="journal article" date="2002" name="Proc. Natl. Acad. Sci. U.S.A.">
        <title>Extensive mosaic structure revealed by the complete genome sequence of uropathogenic Escherichia coli.</title>
        <authorList>
            <person name="Welch R.A."/>
            <person name="Burland V."/>
            <person name="Plunkett G. III"/>
            <person name="Redford P."/>
            <person name="Roesch P."/>
            <person name="Rasko D."/>
            <person name="Buckles E.L."/>
            <person name="Liou S.-R."/>
            <person name="Boutin A."/>
            <person name="Hackett J."/>
            <person name="Stroud D."/>
            <person name="Mayhew G.F."/>
            <person name="Rose D.J."/>
            <person name="Zhou S."/>
            <person name="Schwartz D.C."/>
            <person name="Perna N.T."/>
            <person name="Mobley H.L.T."/>
            <person name="Donnenberg M.S."/>
            <person name="Blattner F.R."/>
        </authorList>
    </citation>
    <scope>NUCLEOTIDE SEQUENCE [LARGE SCALE GENOMIC DNA]</scope>
    <source>
        <strain>CFT073 / ATCC 700928 / UPEC</strain>
    </source>
</reference>
<feature type="chain" id="PRO_0000134540" description="Orotidine 5'-phosphate decarboxylase">
    <location>
        <begin position="1"/>
        <end position="245"/>
    </location>
</feature>
<feature type="active site" description="Proton donor" evidence="1">
    <location>
        <position position="73"/>
    </location>
</feature>
<feature type="binding site" evidence="1">
    <location>
        <position position="22"/>
    </location>
    <ligand>
        <name>substrate</name>
    </ligand>
</feature>
<feature type="binding site" evidence="1">
    <location>
        <position position="44"/>
    </location>
    <ligand>
        <name>substrate</name>
    </ligand>
</feature>
<feature type="binding site" evidence="1">
    <location>
        <begin position="71"/>
        <end position="80"/>
    </location>
    <ligand>
        <name>substrate</name>
    </ligand>
</feature>
<feature type="binding site" evidence="1">
    <location>
        <position position="131"/>
    </location>
    <ligand>
        <name>substrate</name>
    </ligand>
</feature>
<feature type="binding site" evidence="1">
    <location>
        <position position="192"/>
    </location>
    <ligand>
        <name>substrate</name>
    </ligand>
</feature>
<feature type="binding site" evidence="1">
    <location>
        <position position="201"/>
    </location>
    <ligand>
        <name>substrate</name>
    </ligand>
</feature>
<feature type="binding site" evidence="1">
    <location>
        <position position="221"/>
    </location>
    <ligand>
        <name>substrate</name>
    </ligand>
</feature>
<feature type="binding site" evidence="1">
    <location>
        <position position="222"/>
    </location>
    <ligand>
        <name>substrate</name>
    </ligand>
</feature>
<accession>Q8FHU2</accession>
<sequence length="245" mass="26151">MTLTASSSSRAVTNSPVVVALDYHNRDAAMAFVDKIDPRDCRLKVGKEMFTLFGPQFVSELQQRGFDIFLDLKFHDIPNTAAHAVAAAADLGVWMVNVHASGGARMMAAAREALVPFGKDAPLLIAVTVLTSMEASDLADLGVTLSPADYAERLAALTQKCGLDGVVCSAQEAVRFKQVFGQEFKLVTPGIRPQGSDAGDQRRIMTPEQALSAGVDYMVIGRPVTQSVDPAQTLKAINASLQRSA</sequence>
<gene>
    <name evidence="1" type="primary">pyrF</name>
    <name type="ordered locus">c1750</name>
</gene>
<keyword id="KW-0210">Decarboxylase</keyword>
<keyword id="KW-0456">Lyase</keyword>
<keyword id="KW-0665">Pyrimidine biosynthesis</keyword>
<keyword id="KW-1185">Reference proteome</keyword>
<evidence type="ECO:0000255" key="1">
    <source>
        <dbReference type="HAMAP-Rule" id="MF_01200"/>
    </source>
</evidence>
<evidence type="ECO:0000305" key="2"/>